<proteinExistence type="inferred from homology"/>
<dbReference type="EMBL" id="CP000921">
    <property type="protein sequence ID" value="ACO23342.1"/>
    <property type="molecule type" value="Genomic_DNA"/>
</dbReference>
<dbReference type="RefSeq" id="WP_000268761.1">
    <property type="nucleotide sequence ID" value="NC_012469.1"/>
</dbReference>
<dbReference type="SMR" id="C1CQN4"/>
<dbReference type="GeneID" id="45653854"/>
<dbReference type="KEGG" id="snt:SPT_0787"/>
<dbReference type="HOGENOM" id="CLU_100590_5_0_9"/>
<dbReference type="GO" id="GO:0005737">
    <property type="term" value="C:cytoplasm"/>
    <property type="evidence" value="ECO:0007669"/>
    <property type="project" value="UniProtKB-ARBA"/>
</dbReference>
<dbReference type="GO" id="GO:0015935">
    <property type="term" value="C:small ribosomal subunit"/>
    <property type="evidence" value="ECO:0007669"/>
    <property type="project" value="TreeGrafter"/>
</dbReference>
<dbReference type="GO" id="GO:0003735">
    <property type="term" value="F:structural constituent of ribosome"/>
    <property type="evidence" value="ECO:0007669"/>
    <property type="project" value="InterPro"/>
</dbReference>
<dbReference type="GO" id="GO:0006412">
    <property type="term" value="P:translation"/>
    <property type="evidence" value="ECO:0007669"/>
    <property type="project" value="UniProtKB-UniRule"/>
</dbReference>
<dbReference type="FunFam" id="3.30.1320.10:FF:000002">
    <property type="entry name" value="30S ribosomal protein S16"/>
    <property type="match status" value="1"/>
</dbReference>
<dbReference type="Gene3D" id="3.30.1320.10">
    <property type="match status" value="1"/>
</dbReference>
<dbReference type="HAMAP" id="MF_00385">
    <property type="entry name" value="Ribosomal_bS16"/>
    <property type="match status" value="1"/>
</dbReference>
<dbReference type="InterPro" id="IPR000307">
    <property type="entry name" value="Ribosomal_bS16"/>
</dbReference>
<dbReference type="InterPro" id="IPR023803">
    <property type="entry name" value="Ribosomal_bS16_dom_sf"/>
</dbReference>
<dbReference type="NCBIfam" id="TIGR00002">
    <property type="entry name" value="S16"/>
    <property type="match status" value="1"/>
</dbReference>
<dbReference type="PANTHER" id="PTHR12919">
    <property type="entry name" value="30S RIBOSOMAL PROTEIN S16"/>
    <property type="match status" value="1"/>
</dbReference>
<dbReference type="PANTHER" id="PTHR12919:SF20">
    <property type="entry name" value="SMALL RIBOSOMAL SUBUNIT PROTEIN BS16M"/>
    <property type="match status" value="1"/>
</dbReference>
<dbReference type="Pfam" id="PF00886">
    <property type="entry name" value="Ribosomal_S16"/>
    <property type="match status" value="1"/>
</dbReference>
<dbReference type="SUPFAM" id="SSF54565">
    <property type="entry name" value="Ribosomal protein S16"/>
    <property type="match status" value="1"/>
</dbReference>
<gene>
    <name evidence="1" type="primary">rpsP</name>
    <name type="ordered locus">SPT_0787</name>
</gene>
<comment type="similarity">
    <text evidence="1">Belongs to the bacterial ribosomal protein bS16 family.</text>
</comment>
<protein>
    <recommendedName>
        <fullName evidence="1">Small ribosomal subunit protein bS16</fullName>
    </recommendedName>
    <alternativeName>
        <fullName evidence="2">30S ribosomal protein S16</fullName>
    </alternativeName>
</protein>
<reference key="1">
    <citation type="journal article" date="2010" name="Genome Biol.">
        <title>Structure and dynamics of the pan-genome of Streptococcus pneumoniae and closely related species.</title>
        <authorList>
            <person name="Donati C."/>
            <person name="Hiller N.L."/>
            <person name="Tettelin H."/>
            <person name="Muzzi A."/>
            <person name="Croucher N.J."/>
            <person name="Angiuoli S.V."/>
            <person name="Oggioni M."/>
            <person name="Dunning Hotopp J.C."/>
            <person name="Hu F.Z."/>
            <person name="Riley D.R."/>
            <person name="Covacci A."/>
            <person name="Mitchell T.J."/>
            <person name="Bentley S.D."/>
            <person name="Kilian M."/>
            <person name="Ehrlich G.D."/>
            <person name="Rappuoli R."/>
            <person name="Moxon E.R."/>
            <person name="Masignani V."/>
        </authorList>
    </citation>
    <scope>NUCLEOTIDE SEQUENCE [LARGE SCALE GENOMIC DNA]</scope>
    <source>
        <strain>Taiwan19F-14</strain>
    </source>
</reference>
<sequence>MAVKIRLTRMGSKKKPFYRINVADSRSPRDGRFIETVGTYNPLVAENQVTLKEDRVLAWLANGAQPSDTVRNILSKEGVLKKFHDSKFSK</sequence>
<name>RS16_STRZT</name>
<organism>
    <name type="scientific">Streptococcus pneumoniae (strain Taiwan19F-14)</name>
    <dbReference type="NCBI Taxonomy" id="487213"/>
    <lineage>
        <taxon>Bacteria</taxon>
        <taxon>Bacillati</taxon>
        <taxon>Bacillota</taxon>
        <taxon>Bacilli</taxon>
        <taxon>Lactobacillales</taxon>
        <taxon>Streptococcaceae</taxon>
        <taxon>Streptococcus</taxon>
    </lineage>
</organism>
<feature type="chain" id="PRO_1000134330" description="Small ribosomal subunit protein bS16">
    <location>
        <begin position="1"/>
        <end position="90"/>
    </location>
</feature>
<keyword id="KW-0687">Ribonucleoprotein</keyword>
<keyword id="KW-0689">Ribosomal protein</keyword>
<accession>C1CQN4</accession>
<evidence type="ECO:0000255" key="1">
    <source>
        <dbReference type="HAMAP-Rule" id="MF_00385"/>
    </source>
</evidence>
<evidence type="ECO:0000305" key="2"/>